<gene>
    <name type="primary">gep4</name>
    <name type="ORF">SPCC645.02</name>
</gene>
<keyword id="KW-0378">Hydrolase</keyword>
<keyword id="KW-0444">Lipid biosynthesis</keyword>
<keyword id="KW-0443">Lipid metabolism</keyword>
<keyword id="KW-0472">Membrane</keyword>
<keyword id="KW-0496">Mitochondrion</keyword>
<keyword id="KW-0999">Mitochondrion inner membrane</keyword>
<keyword id="KW-0594">Phospholipid biosynthesis</keyword>
<keyword id="KW-1208">Phospholipid metabolism</keyword>
<keyword id="KW-1185">Reference proteome</keyword>
<feature type="chain" id="PRO_0000351427" description="Probable phosphatidylglycerophosphatase, mitochondrial">
    <location>
        <begin position="1"/>
        <end position="209"/>
    </location>
</feature>
<feature type="short sequence motif" description="Phosphoryl acceptor">
    <location>
        <begin position="57"/>
        <end position="61"/>
    </location>
</feature>
<organism>
    <name type="scientific">Schizosaccharomyces pombe (strain 972 / ATCC 24843)</name>
    <name type="common">Fission yeast</name>
    <dbReference type="NCBI Taxonomy" id="284812"/>
    <lineage>
        <taxon>Eukaryota</taxon>
        <taxon>Fungi</taxon>
        <taxon>Dikarya</taxon>
        <taxon>Ascomycota</taxon>
        <taxon>Taphrinomycotina</taxon>
        <taxon>Schizosaccharomycetes</taxon>
        <taxon>Schizosaccharomycetales</taxon>
        <taxon>Schizosaccharomycetaceae</taxon>
        <taxon>Schizosaccharomyces</taxon>
    </lineage>
</organism>
<dbReference type="EC" id="3.1.3.27"/>
<dbReference type="EMBL" id="CU329672">
    <property type="protein sequence ID" value="CAB39898.2"/>
    <property type="molecule type" value="Genomic_DNA"/>
</dbReference>
<dbReference type="PIR" id="T41519">
    <property type="entry name" value="T41519"/>
</dbReference>
<dbReference type="RefSeq" id="NP_588111.2">
    <property type="nucleotide sequence ID" value="NM_001023101.2"/>
</dbReference>
<dbReference type="FunCoup" id="Q9Y7U3">
    <property type="interactions" value="266"/>
</dbReference>
<dbReference type="STRING" id="284812.Q9Y7U3"/>
<dbReference type="PaxDb" id="4896-SPCC645.02.1"/>
<dbReference type="EnsemblFungi" id="SPCC645.02.1">
    <property type="protein sequence ID" value="SPCC645.02.1:pep"/>
    <property type="gene ID" value="SPCC645.02"/>
</dbReference>
<dbReference type="GeneID" id="2539038"/>
<dbReference type="KEGG" id="spo:2539038"/>
<dbReference type="PomBase" id="SPCC645.02">
    <property type="gene designation" value="gep4"/>
</dbReference>
<dbReference type="VEuPathDB" id="FungiDB:SPCC645.02"/>
<dbReference type="eggNOG" id="KOG2961">
    <property type="taxonomic scope" value="Eukaryota"/>
</dbReference>
<dbReference type="HOGENOM" id="CLU_056221_3_2_1"/>
<dbReference type="InParanoid" id="Q9Y7U3"/>
<dbReference type="OMA" id="WHEYTAK"/>
<dbReference type="UniPathway" id="UPA00084">
    <property type="reaction ID" value="UER00504"/>
</dbReference>
<dbReference type="PRO" id="PR:Q9Y7U3"/>
<dbReference type="Proteomes" id="UP000002485">
    <property type="component" value="Chromosome III"/>
</dbReference>
<dbReference type="GO" id="GO:0005737">
    <property type="term" value="C:cytoplasm"/>
    <property type="evidence" value="ECO:0000318"/>
    <property type="project" value="GO_Central"/>
</dbReference>
<dbReference type="GO" id="GO:0005743">
    <property type="term" value="C:mitochondrial inner membrane"/>
    <property type="evidence" value="ECO:0007669"/>
    <property type="project" value="UniProtKB-SubCell"/>
</dbReference>
<dbReference type="GO" id="GO:0005759">
    <property type="term" value="C:mitochondrial matrix"/>
    <property type="evidence" value="ECO:0000266"/>
    <property type="project" value="PomBase"/>
</dbReference>
<dbReference type="GO" id="GO:0005739">
    <property type="term" value="C:mitochondrion"/>
    <property type="evidence" value="ECO:0007005"/>
    <property type="project" value="PomBase"/>
</dbReference>
<dbReference type="GO" id="GO:0008962">
    <property type="term" value="F:phosphatidylglycerophosphatase activity"/>
    <property type="evidence" value="ECO:0000318"/>
    <property type="project" value="GO_Central"/>
</dbReference>
<dbReference type="GO" id="GO:0032049">
    <property type="term" value="P:cardiolipin biosynthetic process"/>
    <property type="evidence" value="ECO:0000318"/>
    <property type="project" value="GO_Central"/>
</dbReference>
<dbReference type="GO" id="GO:0007006">
    <property type="term" value="P:mitochondrial membrane organization"/>
    <property type="evidence" value="ECO:0000305"/>
    <property type="project" value="PomBase"/>
</dbReference>
<dbReference type="Gene3D" id="3.40.50.1000">
    <property type="entry name" value="HAD superfamily/HAD-like"/>
    <property type="match status" value="1"/>
</dbReference>
<dbReference type="InterPro" id="IPR036412">
    <property type="entry name" value="HAD-like_sf"/>
</dbReference>
<dbReference type="InterPro" id="IPR006549">
    <property type="entry name" value="HAD-SF_hydro_IIIA"/>
</dbReference>
<dbReference type="InterPro" id="IPR023214">
    <property type="entry name" value="HAD_sf"/>
</dbReference>
<dbReference type="InterPro" id="IPR027706">
    <property type="entry name" value="PGP_Pase"/>
</dbReference>
<dbReference type="NCBIfam" id="TIGR01662">
    <property type="entry name" value="HAD-SF-IIIA"/>
    <property type="match status" value="1"/>
</dbReference>
<dbReference type="Pfam" id="PF09419">
    <property type="entry name" value="PGP_phosphatase"/>
    <property type="match status" value="1"/>
</dbReference>
<dbReference type="SUPFAM" id="SSF56784">
    <property type="entry name" value="HAD-like"/>
    <property type="match status" value="2"/>
</dbReference>
<reference key="1">
    <citation type="journal article" date="2002" name="Nature">
        <title>The genome sequence of Schizosaccharomyces pombe.</title>
        <authorList>
            <person name="Wood V."/>
            <person name="Gwilliam R."/>
            <person name="Rajandream M.A."/>
            <person name="Lyne M.H."/>
            <person name="Lyne R."/>
            <person name="Stewart A."/>
            <person name="Sgouros J.G."/>
            <person name="Peat N."/>
            <person name="Hayles J."/>
            <person name="Baker S.G."/>
            <person name="Basham D."/>
            <person name="Bowman S."/>
            <person name="Brooks K."/>
            <person name="Brown D."/>
            <person name="Brown S."/>
            <person name="Chillingworth T."/>
            <person name="Churcher C.M."/>
            <person name="Collins M."/>
            <person name="Connor R."/>
            <person name="Cronin A."/>
            <person name="Davis P."/>
            <person name="Feltwell T."/>
            <person name="Fraser A."/>
            <person name="Gentles S."/>
            <person name="Goble A."/>
            <person name="Hamlin N."/>
            <person name="Harris D.E."/>
            <person name="Hidalgo J."/>
            <person name="Hodgson G."/>
            <person name="Holroyd S."/>
            <person name="Hornsby T."/>
            <person name="Howarth S."/>
            <person name="Huckle E.J."/>
            <person name="Hunt S."/>
            <person name="Jagels K."/>
            <person name="James K.D."/>
            <person name="Jones L."/>
            <person name="Jones M."/>
            <person name="Leather S."/>
            <person name="McDonald S."/>
            <person name="McLean J."/>
            <person name="Mooney P."/>
            <person name="Moule S."/>
            <person name="Mungall K.L."/>
            <person name="Murphy L.D."/>
            <person name="Niblett D."/>
            <person name="Odell C."/>
            <person name="Oliver K."/>
            <person name="O'Neil S."/>
            <person name="Pearson D."/>
            <person name="Quail M.A."/>
            <person name="Rabbinowitsch E."/>
            <person name="Rutherford K.M."/>
            <person name="Rutter S."/>
            <person name="Saunders D."/>
            <person name="Seeger K."/>
            <person name="Sharp S."/>
            <person name="Skelton J."/>
            <person name="Simmonds M.N."/>
            <person name="Squares R."/>
            <person name="Squares S."/>
            <person name="Stevens K."/>
            <person name="Taylor K."/>
            <person name="Taylor R.G."/>
            <person name="Tivey A."/>
            <person name="Walsh S.V."/>
            <person name="Warren T."/>
            <person name="Whitehead S."/>
            <person name="Woodward J.R."/>
            <person name="Volckaert G."/>
            <person name="Aert R."/>
            <person name="Robben J."/>
            <person name="Grymonprez B."/>
            <person name="Weltjens I."/>
            <person name="Vanstreels E."/>
            <person name="Rieger M."/>
            <person name="Schaefer M."/>
            <person name="Mueller-Auer S."/>
            <person name="Gabel C."/>
            <person name="Fuchs M."/>
            <person name="Duesterhoeft A."/>
            <person name="Fritzc C."/>
            <person name="Holzer E."/>
            <person name="Moestl D."/>
            <person name="Hilbert H."/>
            <person name="Borzym K."/>
            <person name="Langer I."/>
            <person name="Beck A."/>
            <person name="Lehrach H."/>
            <person name="Reinhardt R."/>
            <person name="Pohl T.M."/>
            <person name="Eger P."/>
            <person name="Zimmermann W."/>
            <person name="Wedler H."/>
            <person name="Wambutt R."/>
            <person name="Purnelle B."/>
            <person name="Goffeau A."/>
            <person name="Cadieu E."/>
            <person name="Dreano S."/>
            <person name="Gloux S."/>
            <person name="Lelaure V."/>
            <person name="Mottier S."/>
            <person name="Galibert F."/>
            <person name="Aves S.J."/>
            <person name="Xiang Z."/>
            <person name="Hunt C."/>
            <person name="Moore K."/>
            <person name="Hurst S.M."/>
            <person name="Lucas M."/>
            <person name="Rochet M."/>
            <person name="Gaillardin C."/>
            <person name="Tallada V.A."/>
            <person name="Garzon A."/>
            <person name="Thode G."/>
            <person name="Daga R.R."/>
            <person name="Cruzado L."/>
            <person name="Jimenez J."/>
            <person name="Sanchez M."/>
            <person name="del Rey F."/>
            <person name="Benito J."/>
            <person name="Dominguez A."/>
            <person name="Revuelta J.L."/>
            <person name="Moreno S."/>
            <person name="Armstrong J."/>
            <person name="Forsburg S.L."/>
            <person name="Cerutti L."/>
            <person name="Lowe T."/>
            <person name="McCombie W.R."/>
            <person name="Paulsen I."/>
            <person name="Potashkin J."/>
            <person name="Shpakovski G.V."/>
            <person name="Ussery D."/>
            <person name="Barrell B.G."/>
            <person name="Nurse P."/>
        </authorList>
    </citation>
    <scope>NUCLEOTIDE SEQUENCE [LARGE SCALE GENOMIC DNA]</scope>
    <source>
        <strain>972 / ATCC 24843</strain>
    </source>
</reference>
<reference key="2">
    <citation type="journal article" date="2011" name="Science">
        <title>Comparative functional genomics of the fission yeasts.</title>
        <authorList>
            <person name="Rhind N."/>
            <person name="Chen Z."/>
            <person name="Yassour M."/>
            <person name="Thompson D.A."/>
            <person name="Haas B.J."/>
            <person name="Habib N."/>
            <person name="Wapinski I."/>
            <person name="Roy S."/>
            <person name="Lin M.F."/>
            <person name="Heiman D.I."/>
            <person name="Young S.K."/>
            <person name="Furuya K."/>
            <person name="Guo Y."/>
            <person name="Pidoux A."/>
            <person name="Chen H.M."/>
            <person name="Robbertse B."/>
            <person name="Goldberg J.M."/>
            <person name="Aoki K."/>
            <person name="Bayne E.H."/>
            <person name="Berlin A.M."/>
            <person name="Desjardins C.A."/>
            <person name="Dobbs E."/>
            <person name="Dukaj L."/>
            <person name="Fan L."/>
            <person name="FitzGerald M.G."/>
            <person name="French C."/>
            <person name="Gujja S."/>
            <person name="Hansen K."/>
            <person name="Keifenheim D."/>
            <person name="Levin J.Z."/>
            <person name="Mosher R.A."/>
            <person name="Mueller C.A."/>
            <person name="Pfiffner J."/>
            <person name="Priest M."/>
            <person name="Russ C."/>
            <person name="Smialowska A."/>
            <person name="Swoboda P."/>
            <person name="Sykes S.M."/>
            <person name="Vaughn M."/>
            <person name="Vengrova S."/>
            <person name="Yoder R."/>
            <person name="Zeng Q."/>
            <person name="Allshire R."/>
            <person name="Baulcombe D."/>
            <person name="Birren B.W."/>
            <person name="Brown W."/>
            <person name="Ekwall K."/>
            <person name="Kellis M."/>
            <person name="Leatherwood J."/>
            <person name="Levin H."/>
            <person name="Margalit H."/>
            <person name="Martienssen R."/>
            <person name="Nieduszynski C.A."/>
            <person name="Spatafora J.W."/>
            <person name="Friedman N."/>
            <person name="Dalgaard J.Z."/>
            <person name="Baumann P."/>
            <person name="Niki H."/>
            <person name="Regev A."/>
            <person name="Nusbaum C."/>
        </authorList>
    </citation>
    <scope>REVISION OF GENE MODEL</scope>
</reference>
<reference key="3">
    <citation type="journal article" date="2006" name="Nat. Biotechnol.">
        <title>ORFeome cloning and global analysis of protein localization in the fission yeast Schizosaccharomyces pombe.</title>
        <authorList>
            <person name="Matsuyama A."/>
            <person name="Arai R."/>
            <person name="Yashiroda Y."/>
            <person name="Shirai A."/>
            <person name="Kamata A."/>
            <person name="Sekido S."/>
            <person name="Kobayashi Y."/>
            <person name="Hashimoto A."/>
            <person name="Hamamoto M."/>
            <person name="Hiraoka Y."/>
            <person name="Horinouchi S."/>
            <person name="Yoshida M."/>
        </authorList>
    </citation>
    <scope>SUBCELLULAR LOCATION [LARGE SCALE ANALYSIS]</scope>
</reference>
<evidence type="ECO:0000250" key="1"/>
<evidence type="ECO:0000269" key="2">
    <source>
    </source>
</evidence>
<evidence type="ECO:0000305" key="3"/>
<sequence length="209" mass="23992">MLINIEGIQAFCQTIRNPRRIIPHATFPTFSQIPCNINYFLEQKFQVPVDIRALVLDKDNCITLPNETTIAEAELKKIREFQNIYGEKNVILLSNSIGTRKLDPTGELAAHFQQKWNIPVVRHSKLKPLCTEELYTYLSNNSHVSSASQILFIGDRLLTDITLANIMGSWGVWLTRGVGNTTNMMMEVESWLYKRIHTQNPYIPTNRKS</sequence>
<name>GEP4_SCHPO</name>
<proteinExistence type="inferred from homology"/>
<accession>Q9Y7U3</accession>
<protein>
    <recommendedName>
        <fullName>Probable phosphatidylglycerophosphatase, mitochondrial</fullName>
        <ecNumber>3.1.3.27</ecNumber>
    </recommendedName>
    <alternativeName>
        <fullName>PGP phosphatase</fullName>
    </alternativeName>
</protein>
<comment type="function">
    <text evidence="1">Phosphatidylglycerophosphatase involved in the biosynthesis of cardiolipin (CL), a unique dimeric phosphoglycerolipid predominantly present in mitochondrial membranes and which has important functions for cellular energy metabolism, mitochondrial dynamics and the initiation of apoptotic pathways.</text>
</comment>
<comment type="catalytic activity">
    <reaction>
        <text>a 1,2-diacyl-sn-glycero-3-phospho-(1'-sn-glycero-3'-phosphate) + H2O = a 1,2-diacyl-sn-glycero-3-phospho-(1'-sn-glycerol) + phosphate</text>
        <dbReference type="Rhea" id="RHEA:33751"/>
        <dbReference type="ChEBI" id="CHEBI:15377"/>
        <dbReference type="ChEBI" id="CHEBI:43474"/>
        <dbReference type="ChEBI" id="CHEBI:60110"/>
        <dbReference type="ChEBI" id="CHEBI:64716"/>
        <dbReference type="EC" id="3.1.3.27"/>
    </reaction>
</comment>
<comment type="pathway">
    <text>Phospholipid metabolism; phosphatidylglycerol biosynthesis; phosphatidylglycerol from CDP-diacylglycerol: step 2/2.</text>
</comment>
<comment type="subcellular location">
    <subcellularLocation>
        <location evidence="2">Mitochondrion inner membrane</location>
        <topology evidence="2">Peripheral membrane protein</topology>
        <orientation evidence="2">Matrix side</orientation>
    </subcellularLocation>
</comment>
<comment type="similarity">
    <text evidence="3">Belongs to the GEP4 family.</text>
</comment>